<proteinExistence type="inferred from homology"/>
<comment type="function">
    <text evidence="2">Effector proteins function to alter host cell physiology and promote bacterial survival in host tissues. This protein is an E3 ubiquitin ligase that interferes with host's ubiquitination pathway.</text>
</comment>
<comment type="catalytic activity">
    <reaction>
        <text>S-ubiquitinyl-[E2 ubiquitin-conjugating enzyme]-L-cysteine + [acceptor protein]-L-lysine = [E2 ubiquitin-conjugating enzyme]-L-cysteine + N(6)-ubiquitinyl-[acceptor protein]-L-lysine.</text>
        <dbReference type="EC" id="2.3.2.26"/>
    </reaction>
</comment>
<comment type="subcellular location">
    <subcellularLocation>
        <location evidence="2">Secreted</location>
    </subcellularLocation>
    <subcellularLocation>
        <location evidence="2">Host cell</location>
    </subcellularLocation>
    <text evidence="2">Secreted via type III secretion system 1 (SPI-1 T3SS), and delivered into the host cell.</text>
</comment>
<comment type="PTM">
    <text evidence="2">Ubiquitinated in the presence of host E1 ubiquitin-activating enzyme, E2 ubiquitin-conjugating enzyme and ubiquitin.</text>
</comment>
<comment type="similarity">
    <text evidence="4">Belongs to the SopA E3 ligase family.</text>
</comment>
<protein>
    <recommendedName>
        <fullName>E3 ubiquitin-protein ligase SopA</fullName>
        <ecNumber>2.3.2.26</ecNumber>
    </recommendedName>
    <alternativeName>
        <fullName evidence="4">HECT-type E3 ubiquitin transferase SopA</fullName>
    </alternativeName>
    <alternativeName>
        <fullName>Salmonella outer protein A</fullName>
    </alternativeName>
    <alternativeName>
        <fullName>Secreted effector protein SopA</fullName>
    </alternativeName>
</protein>
<gene>
    <name type="primary">sopA</name>
    <name type="ordered locus">SeHA_C2289</name>
</gene>
<name>SOPA_SALHS</name>
<feature type="chain" id="PRO_0000395853" description="E3 ubiquitin-protein ligase SopA">
    <location>
        <begin position="1"/>
        <end position="782"/>
    </location>
</feature>
<feature type="region of interest" description="Disordered" evidence="3">
    <location>
        <begin position="137"/>
        <end position="171"/>
    </location>
</feature>
<feature type="compositionally biased region" description="Low complexity" evidence="3">
    <location>
        <begin position="157"/>
        <end position="171"/>
    </location>
</feature>
<feature type="active site" description="Glycyl thioester intermediate" evidence="1">
    <location>
        <position position="753"/>
    </location>
</feature>
<organism>
    <name type="scientific">Salmonella heidelberg (strain SL476)</name>
    <dbReference type="NCBI Taxonomy" id="454169"/>
    <lineage>
        <taxon>Bacteria</taxon>
        <taxon>Pseudomonadati</taxon>
        <taxon>Pseudomonadota</taxon>
        <taxon>Gammaproteobacteria</taxon>
        <taxon>Enterobacterales</taxon>
        <taxon>Enterobacteriaceae</taxon>
        <taxon>Salmonella</taxon>
    </lineage>
</organism>
<keyword id="KW-0964">Secreted</keyword>
<keyword id="KW-0808">Transferase</keyword>
<keyword id="KW-0832">Ubl conjugation</keyword>
<keyword id="KW-0833">Ubl conjugation pathway</keyword>
<keyword id="KW-0843">Virulence</keyword>
<sequence length="782" mass="86848">MKISSGAINFSTIPNQVKKLITSIREHTKNGLTSKITSVKNTHTSLNEKFKTGKDSPIEFALPQKIKDFFQPKDKNTLNKTLITVKNIKDTNNAGKKNISAEDVSKMNAAFMRKHIANQTCDYNYRMTGAAPLPGGVSVSANNRPTVSEGRTPPVSPSLSLQATSSPSSPADWAKKLTDAVLRQKAGETLTAADRDFSNADFRNITFSKILPPSFMERDGDIIKGFNFSNSKFTYSDISHLHFDECRFTYSTLSDVVCSNTKFSNSDMNEVFLQYSITTQQQPSFIDTTLKNTLIRHKANLSGVILNEPDNSSPPSVSRGGNFIRLGDIWLQMPLLWTENAADGFLNHEHNNGKSILMTIDSLPDKYSQEKVRAMEDLVKSLRDGRLTEAGIRPVESSLVSVLAHPPYTQSALISEWLGPVQERFFAHQCQTYNDVPLPAPDTYYQQRLLPVLLDSFDRNSAAMTTHSGLFNQVILHCMTGVDCTDGIRQKAAALYEQYLAHPAVSPHIHNGLFGNYDGSPDWTTRAADNFLLLSSQDSDTAMMLSTDTLLTMLNPTPDTAWDNFYLLRAGENVSTAQISPVELFRHDFPVFLAAFNQQATQRRFGELIDIILSTEEHGELNQQFIAATNQKHSTVKLIDDASVSRLATIFAPLLPEGKLSPAHYQHILSAYHLTDATPQKQAETLFCLSTAFARYSSSAIFGTEHDSPPALRGYAEALMQKAWELSPAIFPSSEQFTDWSDRFHGLHGAFTCTSVVADSMQRHARKYFPSVLSSILPLAWA</sequence>
<accession>B4T918</accession>
<dbReference type="EC" id="2.3.2.26"/>
<dbReference type="EMBL" id="CP001120">
    <property type="protein sequence ID" value="ACF67854.1"/>
    <property type="molecule type" value="Genomic_DNA"/>
</dbReference>
<dbReference type="RefSeq" id="WP_000704000.1">
    <property type="nucleotide sequence ID" value="NC_011083.1"/>
</dbReference>
<dbReference type="SMR" id="B4T918"/>
<dbReference type="KEGG" id="seh:SeHA_C2289"/>
<dbReference type="HOGENOM" id="CLU_026158_0_0_6"/>
<dbReference type="Proteomes" id="UP000001866">
    <property type="component" value="Chromosome"/>
</dbReference>
<dbReference type="GO" id="GO:0005576">
    <property type="term" value="C:extracellular region"/>
    <property type="evidence" value="ECO:0000250"/>
    <property type="project" value="UniProtKB"/>
</dbReference>
<dbReference type="GO" id="GO:0043657">
    <property type="term" value="C:host cell"/>
    <property type="evidence" value="ECO:0007669"/>
    <property type="project" value="UniProtKB-SubCell"/>
</dbReference>
<dbReference type="GO" id="GO:0004842">
    <property type="term" value="F:ubiquitin-protein transferase activity"/>
    <property type="evidence" value="ECO:0000250"/>
    <property type="project" value="UniProtKB"/>
</dbReference>
<dbReference type="GO" id="GO:0016567">
    <property type="term" value="P:protein ubiquitination"/>
    <property type="evidence" value="ECO:0000250"/>
    <property type="project" value="UniProtKB"/>
</dbReference>
<dbReference type="FunFam" id="2.160.20.80:FF:000005">
    <property type="entry name" value="SPI-1 type III secretion system effector HECT-type E3 ubiquitin transferase SopA"/>
    <property type="match status" value="1"/>
</dbReference>
<dbReference type="Gene3D" id="2.160.20.80">
    <property type="entry name" value="E3 ubiquitin-protein ligase SopA"/>
    <property type="match status" value="1"/>
</dbReference>
<dbReference type="Gene3D" id="1.10.4140.10">
    <property type="entry name" value="effector protein (NleL)"/>
    <property type="match status" value="1"/>
</dbReference>
<dbReference type="Gene3D" id="3.40.1850.10">
    <property type="entry name" value="HECT-like ubiquitin ligase"/>
    <property type="match status" value="1"/>
</dbReference>
<dbReference type="Gene3D" id="1.25.40.300">
    <property type="entry name" value="Putative secreted effector protein"/>
    <property type="match status" value="1"/>
</dbReference>
<dbReference type="InterPro" id="IPR025725">
    <property type="entry name" value="SopA-like_cat"/>
</dbReference>
<dbReference type="InterPro" id="IPR038270">
    <property type="entry name" value="SopA-like_catalytic_sf"/>
</dbReference>
<dbReference type="InterPro" id="IPR025726">
    <property type="entry name" value="SopA-like_central"/>
</dbReference>
<dbReference type="NCBIfam" id="NF011904">
    <property type="entry name" value="PRK15377.1"/>
    <property type="match status" value="1"/>
</dbReference>
<dbReference type="Pfam" id="PF13981">
    <property type="entry name" value="SopA"/>
    <property type="match status" value="1"/>
</dbReference>
<dbReference type="Pfam" id="PF13979">
    <property type="entry name" value="SopA_C"/>
    <property type="match status" value="1"/>
</dbReference>
<dbReference type="SUPFAM" id="SSF141571">
    <property type="entry name" value="Pentapeptide repeat-like"/>
    <property type="match status" value="1"/>
</dbReference>
<reference key="1">
    <citation type="journal article" date="2011" name="J. Bacteriol.">
        <title>Comparative genomics of 28 Salmonella enterica isolates: evidence for CRISPR-mediated adaptive sublineage evolution.</title>
        <authorList>
            <person name="Fricke W.F."/>
            <person name="Mammel M.K."/>
            <person name="McDermott P.F."/>
            <person name="Tartera C."/>
            <person name="White D.G."/>
            <person name="Leclerc J.E."/>
            <person name="Ravel J."/>
            <person name="Cebula T.A."/>
        </authorList>
    </citation>
    <scope>NUCLEOTIDE SEQUENCE [LARGE SCALE GENOMIC DNA]</scope>
    <source>
        <strain>SL476</strain>
    </source>
</reference>
<evidence type="ECO:0000250" key="1"/>
<evidence type="ECO:0000250" key="2">
    <source>
        <dbReference type="UniProtKB" id="Q8ZNR3"/>
    </source>
</evidence>
<evidence type="ECO:0000256" key="3">
    <source>
        <dbReference type="SAM" id="MobiDB-lite"/>
    </source>
</evidence>
<evidence type="ECO:0000305" key="4"/>